<sequence length="545" mass="62161">MSGRAPFIKPVLEYNEHGWGPCEELSVDVPYQPFCKSDRVGKISDWTAPPTERKFANKYVSSFGNSNQYAYFHEDDESTFHLVDTSGFKGFRPFQRGRFRGNTRNNPRTRGRTGRGGAVTGTGGNQPGVGVNERTKYGKGRDNRRQMGRRFGRNAPTRMRESSVVVRSDWVSIEEIDFPRLLKLSLPNVKEGQDVVTCGSLEYYDKTYDRINVKNERPLLKTDRIIHTLTTTDDPVIRRLSKTIGNIFATDEILATIMCCTRSNYSWDVVFDKVGNKIFLDKRDNAQFDLLTVNETALEPPLEEEGSINSPHSLAMEATLINHNFCQQVLRGGDQKKYQFEEPYTLEESGVDLVSIGYRYKQWDLGNNIILIARCKHNGVLQGPNGEVQFLSIRALNEWDSKASNSLEWRQKLDTQHGAVLASELRNNACKLARWTVESVLSGSDQLKLGYVSRVSTRDHLRHVILRTQQFKPQEFSTQINLSMDNAWGILRCLIDIVMKQPDGKYLLMKDPNKPMVRLYDVPENAFESSDEDDLSDDKLFLLSN</sequence>
<protein>
    <recommendedName>
        <fullName evidence="2">Eukaryotic translation initiation factor 3 subunit D-2</fullName>
        <shortName evidence="2">eIF3d-2</shortName>
    </recommendedName>
    <alternativeName>
        <fullName evidence="2">Eukaryotic translation initiation factor 3 subunit 7-2</fullName>
    </alternativeName>
</protein>
<feature type="chain" id="PRO_0000364155" description="Eukaryotic translation initiation factor 3 subunit D-2">
    <location>
        <begin position="1"/>
        <end position="545"/>
    </location>
</feature>
<feature type="region of interest" description="Disordered" evidence="3">
    <location>
        <begin position="94"/>
        <end position="148"/>
    </location>
</feature>
<feature type="region of interest" description="RNA gate" evidence="1">
    <location>
        <begin position="287"/>
        <end position="301"/>
    </location>
</feature>
<feature type="compositionally biased region" description="Basic residues" evidence="3">
    <location>
        <begin position="95"/>
        <end position="113"/>
    </location>
</feature>
<feature type="compositionally biased region" description="Gly residues" evidence="3">
    <location>
        <begin position="114"/>
        <end position="127"/>
    </location>
</feature>
<feature type="compositionally biased region" description="Basic and acidic residues" evidence="3">
    <location>
        <begin position="133"/>
        <end position="145"/>
    </location>
</feature>
<reference key="1">
    <citation type="journal article" date="2005" name="Genome Res.">
        <title>Comparative genome sequencing of Drosophila pseudoobscura: chromosomal, gene, and cis-element evolution.</title>
        <authorList>
            <person name="Richards S."/>
            <person name="Liu Y."/>
            <person name="Bettencourt B.R."/>
            <person name="Hradecky P."/>
            <person name="Letovsky S."/>
            <person name="Nielsen R."/>
            <person name="Thornton K."/>
            <person name="Hubisz M.J."/>
            <person name="Chen R."/>
            <person name="Meisel R.P."/>
            <person name="Couronne O."/>
            <person name="Hua S."/>
            <person name="Smith M.A."/>
            <person name="Zhang P."/>
            <person name="Liu J."/>
            <person name="Bussemaker H.J."/>
            <person name="van Batenburg M.F."/>
            <person name="Howells S.L."/>
            <person name="Scherer S.E."/>
            <person name="Sodergren E."/>
            <person name="Matthews B.B."/>
            <person name="Crosby M.A."/>
            <person name="Schroeder A.J."/>
            <person name="Ortiz-Barrientos D."/>
            <person name="Rives C.M."/>
            <person name="Metzker M.L."/>
            <person name="Muzny D.M."/>
            <person name="Scott G."/>
            <person name="Steffen D."/>
            <person name="Wheeler D.A."/>
            <person name="Worley K.C."/>
            <person name="Havlak P."/>
            <person name="Durbin K.J."/>
            <person name="Egan A."/>
            <person name="Gill R."/>
            <person name="Hume J."/>
            <person name="Morgan M.B."/>
            <person name="Miner G."/>
            <person name="Hamilton C."/>
            <person name="Huang Y."/>
            <person name="Waldron L."/>
            <person name="Verduzco D."/>
            <person name="Clerc-Blankenburg K.P."/>
            <person name="Dubchak I."/>
            <person name="Noor M.A.F."/>
            <person name="Anderson W."/>
            <person name="White K.P."/>
            <person name="Clark A.G."/>
            <person name="Schaeffer S.W."/>
            <person name="Gelbart W.M."/>
            <person name="Weinstock G.M."/>
            <person name="Gibbs R.A."/>
        </authorList>
    </citation>
    <scope>NUCLEOTIDE SEQUENCE [LARGE SCALE GENOMIC DNA]</scope>
    <source>
        <strain>MV2-25 / Tucson 14011-0121.94</strain>
    </source>
</reference>
<comment type="function">
    <text evidence="2">mRNA cap-binding component of the eukaryotic translation initiation factor 3 (eIF-3) complex, which is involved in protein synthesis of a specialized repertoire of mRNAs and, together with other initiation factors, stimulates binding of mRNA and methionyl-tRNAi to the 40S ribosome. The eIF-3 complex specifically targets and initiates translation of a subset of mRNAs involved in cell proliferation. In the eIF-3 complex, eif3d specifically recognizes and binds the 7-methylguanosine cap of a subset of mRNAs.</text>
</comment>
<comment type="subunit">
    <text evidence="2">Component of the eukaryotic translation initiation factor 3 (eIF-3) complex. The eIF-3 complex interacts with pix.</text>
</comment>
<comment type="subcellular location">
    <subcellularLocation>
        <location evidence="2">Cytoplasm</location>
    </subcellularLocation>
</comment>
<comment type="domain">
    <text evidence="2">The RNA gate region regulates mRNA cap recognition to prevent promiscuous mRNA-binding before assembly of eif3d into the full eukaryotic translation initiation factor 3 (eIF-3) complex.</text>
</comment>
<comment type="similarity">
    <text evidence="2">Belongs to the eIF-3 subunit D family.</text>
</comment>
<gene>
    <name evidence="2" type="primary">eIF3d2</name>
    <name evidence="2" type="synonym">eIF3-S7-2</name>
    <name type="ORF">GA18448</name>
</gene>
<dbReference type="EMBL" id="CM000070">
    <property type="protein sequence ID" value="EAL28637.2"/>
    <property type="molecule type" value="Genomic_DNA"/>
</dbReference>
<dbReference type="RefSeq" id="XP_001359491.2">
    <property type="nucleotide sequence ID" value="XM_001359454.3"/>
</dbReference>
<dbReference type="RefSeq" id="XP_015037942.1">
    <property type="nucleotide sequence ID" value="XM_015182456.1"/>
</dbReference>
<dbReference type="SMR" id="Q295S1"/>
<dbReference type="FunCoup" id="Q295S1">
    <property type="interactions" value="1894"/>
</dbReference>
<dbReference type="STRING" id="46245.Q295S1"/>
<dbReference type="EnsemblMetazoa" id="FBtr0283027">
    <property type="protein sequence ID" value="FBpp0281465"/>
    <property type="gene ID" value="FBgn0078450"/>
</dbReference>
<dbReference type="EnsemblMetazoa" id="FBtr0373156">
    <property type="protein sequence ID" value="FBpp0334995"/>
    <property type="gene ID" value="FBgn0078450"/>
</dbReference>
<dbReference type="eggNOG" id="KOG2479">
    <property type="taxonomic scope" value="Eukaryota"/>
</dbReference>
<dbReference type="HOGENOM" id="CLU_024521_2_0_1"/>
<dbReference type="InParanoid" id="Q295S1"/>
<dbReference type="OMA" id="CKHNGVI"/>
<dbReference type="Proteomes" id="UP000001819">
    <property type="component" value="Unplaced"/>
</dbReference>
<dbReference type="Bgee" id="FBgn0078450">
    <property type="expression patterns" value="Expressed in male reproductive system and 2 other cell types or tissues"/>
</dbReference>
<dbReference type="GO" id="GO:0016282">
    <property type="term" value="C:eukaryotic 43S preinitiation complex"/>
    <property type="evidence" value="ECO:0007669"/>
    <property type="project" value="UniProtKB-UniRule"/>
</dbReference>
<dbReference type="GO" id="GO:0033290">
    <property type="term" value="C:eukaryotic 48S preinitiation complex"/>
    <property type="evidence" value="ECO:0007669"/>
    <property type="project" value="UniProtKB-UniRule"/>
</dbReference>
<dbReference type="GO" id="GO:0005852">
    <property type="term" value="C:eukaryotic translation initiation factor 3 complex"/>
    <property type="evidence" value="ECO:0000250"/>
    <property type="project" value="UniProtKB"/>
</dbReference>
<dbReference type="GO" id="GO:0098808">
    <property type="term" value="F:mRNA cap binding"/>
    <property type="evidence" value="ECO:0007669"/>
    <property type="project" value="UniProtKB-UniRule"/>
</dbReference>
<dbReference type="GO" id="GO:0003743">
    <property type="term" value="F:translation initiation factor activity"/>
    <property type="evidence" value="ECO:0000250"/>
    <property type="project" value="UniProtKB"/>
</dbReference>
<dbReference type="GO" id="GO:0002191">
    <property type="term" value="P:cap-dependent translational initiation"/>
    <property type="evidence" value="ECO:0007669"/>
    <property type="project" value="UniProtKB-UniRule"/>
</dbReference>
<dbReference type="GO" id="GO:0001732">
    <property type="term" value="P:formation of cytoplasmic translation initiation complex"/>
    <property type="evidence" value="ECO:0007669"/>
    <property type="project" value="UniProtKB-UniRule"/>
</dbReference>
<dbReference type="GO" id="GO:0006446">
    <property type="term" value="P:regulation of translational initiation"/>
    <property type="evidence" value="ECO:0000250"/>
    <property type="project" value="UniProtKB"/>
</dbReference>
<dbReference type="HAMAP" id="MF_03003">
    <property type="entry name" value="eIF3d"/>
    <property type="match status" value="1"/>
</dbReference>
<dbReference type="InterPro" id="IPR007783">
    <property type="entry name" value="eIF3d"/>
</dbReference>
<dbReference type="PANTHER" id="PTHR12399">
    <property type="entry name" value="EUKARYOTIC TRANSLATION INITIATION FACTOR 3 SUBUNIT 7"/>
    <property type="match status" value="1"/>
</dbReference>
<dbReference type="PANTHER" id="PTHR12399:SF0">
    <property type="entry name" value="EUKARYOTIC TRANSLATION INITIATION FACTOR 3 SUBUNIT D"/>
    <property type="match status" value="1"/>
</dbReference>
<dbReference type="Pfam" id="PF05091">
    <property type="entry name" value="eIF-3_zeta"/>
    <property type="match status" value="1"/>
</dbReference>
<dbReference type="PIRSF" id="PIRSF016281">
    <property type="entry name" value="EIF-3_zeta"/>
    <property type="match status" value="1"/>
</dbReference>
<organism>
    <name type="scientific">Drosophila pseudoobscura pseudoobscura</name>
    <name type="common">Fruit fly</name>
    <dbReference type="NCBI Taxonomy" id="46245"/>
    <lineage>
        <taxon>Eukaryota</taxon>
        <taxon>Metazoa</taxon>
        <taxon>Ecdysozoa</taxon>
        <taxon>Arthropoda</taxon>
        <taxon>Hexapoda</taxon>
        <taxon>Insecta</taxon>
        <taxon>Pterygota</taxon>
        <taxon>Neoptera</taxon>
        <taxon>Endopterygota</taxon>
        <taxon>Diptera</taxon>
        <taxon>Brachycera</taxon>
        <taxon>Muscomorpha</taxon>
        <taxon>Ephydroidea</taxon>
        <taxon>Drosophilidae</taxon>
        <taxon>Drosophila</taxon>
        <taxon>Sophophora</taxon>
    </lineage>
</organism>
<evidence type="ECO:0000250" key="1">
    <source>
        <dbReference type="UniProtKB" id="K7IM66"/>
    </source>
</evidence>
<evidence type="ECO:0000255" key="2">
    <source>
        <dbReference type="HAMAP-Rule" id="MF_03003"/>
    </source>
</evidence>
<evidence type="ECO:0000256" key="3">
    <source>
        <dbReference type="SAM" id="MobiDB-lite"/>
    </source>
</evidence>
<proteinExistence type="inferred from homology"/>
<name>EI3D2_DROPS</name>
<accession>Q295S1</accession>
<keyword id="KW-0963">Cytoplasm</keyword>
<keyword id="KW-0396">Initiation factor</keyword>
<keyword id="KW-0648">Protein biosynthesis</keyword>
<keyword id="KW-1185">Reference proteome</keyword>
<keyword id="KW-0694">RNA-binding</keyword>